<gene>
    <name evidence="1" type="primary">purC</name>
    <name type="ordered locus">Mmar10_1032</name>
</gene>
<dbReference type="EC" id="6.3.2.6" evidence="1"/>
<dbReference type="EMBL" id="CP000449">
    <property type="protein sequence ID" value="ABI65325.1"/>
    <property type="molecule type" value="Genomic_DNA"/>
</dbReference>
<dbReference type="RefSeq" id="WP_011642972.1">
    <property type="nucleotide sequence ID" value="NC_008347.1"/>
</dbReference>
<dbReference type="SMR" id="Q0AQW2"/>
<dbReference type="STRING" id="394221.Mmar10_1032"/>
<dbReference type="KEGG" id="mmr:Mmar10_1032"/>
<dbReference type="eggNOG" id="COG0152">
    <property type="taxonomic scope" value="Bacteria"/>
</dbReference>
<dbReference type="HOGENOM" id="CLU_061495_2_0_5"/>
<dbReference type="OrthoDB" id="9801549at2"/>
<dbReference type="UniPathway" id="UPA00074">
    <property type="reaction ID" value="UER00131"/>
</dbReference>
<dbReference type="Proteomes" id="UP000001964">
    <property type="component" value="Chromosome"/>
</dbReference>
<dbReference type="GO" id="GO:0005829">
    <property type="term" value="C:cytosol"/>
    <property type="evidence" value="ECO:0007669"/>
    <property type="project" value="TreeGrafter"/>
</dbReference>
<dbReference type="GO" id="GO:0005524">
    <property type="term" value="F:ATP binding"/>
    <property type="evidence" value="ECO:0007669"/>
    <property type="project" value="UniProtKB-KW"/>
</dbReference>
<dbReference type="GO" id="GO:0004639">
    <property type="term" value="F:phosphoribosylaminoimidazolesuccinocarboxamide synthase activity"/>
    <property type="evidence" value="ECO:0007669"/>
    <property type="project" value="UniProtKB-UniRule"/>
</dbReference>
<dbReference type="GO" id="GO:0006189">
    <property type="term" value="P:'de novo' IMP biosynthetic process"/>
    <property type="evidence" value="ECO:0007669"/>
    <property type="project" value="UniProtKB-UniRule"/>
</dbReference>
<dbReference type="GO" id="GO:0009236">
    <property type="term" value="P:cobalamin biosynthetic process"/>
    <property type="evidence" value="ECO:0007669"/>
    <property type="project" value="InterPro"/>
</dbReference>
<dbReference type="CDD" id="cd01415">
    <property type="entry name" value="SAICAR_synt_PurC"/>
    <property type="match status" value="1"/>
</dbReference>
<dbReference type="FunFam" id="3.30.470.20:FF:000006">
    <property type="entry name" value="Phosphoribosylaminoimidazole-succinocarboxamide synthase"/>
    <property type="match status" value="1"/>
</dbReference>
<dbReference type="Gene3D" id="3.30.470.20">
    <property type="entry name" value="ATP-grasp fold, B domain"/>
    <property type="match status" value="1"/>
</dbReference>
<dbReference type="Gene3D" id="3.30.200.20">
    <property type="entry name" value="Phosphorylase Kinase, domain 1"/>
    <property type="match status" value="1"/>
</dbReference>
<dbReference type="HAMAP" id="MF_00137">
    <property type="entry name" value="SAICAR_synth"/>
    <property type="match status" value="1"/>
</dbReference>
<dbReference type="InterPro" id="IPR028923">
    <property type="entry name" value="SAICAR_synt/ADE2_N"/>
</dbReference>
<dbReference type="InterPro" id="IPR033934">
    <property type="entry name" value="SAICAR_synt_PurC"/>
</dbReference>
<dbReference type="InterPro" id="IPR001636">
    <property type="entry name" value="SAICAR_synth"/>
</dbReference>
<dbReference type="InterPro" id="IPR050089">
    <property type="entry name" value="SAICAR_synthetase"/>
</dbReference>
<dbReference type="InterPro" id="IPR018236">
    <property type="entry name" value="SAICAR_synthetase_CS"/>
</dbReference>
<dbReference type="NCBIfam" id="TIGR00081">
    <property type="entry name" value="purC"/>
    <property type="match status" value="1"/>
</dbReference>
<dbReference type="PANTHER" id="PTHR43599">
    <property type="entry name" value="MULTIFUNCTIONAL PROTEIN ADE2"/>
    <property type="match status" value="1"/>
</dbReference>
<dbReference type="PANTHER" id="PTHR43599:SF3">
    <property type="entry name" value="SI:DKEY-6E2.2"/>
    <property type="match status" value="1"/>
</dbReference>
<dbReference type="Pfam" id="PF01259">
    <property type="entry name" value="SAICAR_synt"/>
    <property type="match status" value="1"/>
</dbReference>
<dbReference type="SUPFAM" id="SSF56104">
    <property type="entry name" value="SAICAR synthase-like"/>
    <property type="match status" value="1"/>
</dbReference>
<dbReference type="PROSITE" id="PS01057">
    <property type="entry name" value="SAICAR_SYNTHETASE_1"/>
    <property type="match status" value="1"/>
</dbReference>
<dbReference type="PROSITE" id="PS01058">
    <property type="entry name" value="SAICAR_SYNTHETASE_2"/>
    <property type="match status" value="1"/>
</dbReference>
<reference key="1">
    <citation type="submission" date="2006-08" db="EMBL/GenBank/DDBJ databases">
        <title>Complete sequence of Maricaulis maris MCS10.</title>
        <authorList>
            <consortium name="US DOE Joint Genome Institute"/>
            <person name="Copeland A."/>
            <person name="Lucas S."/>
            <person name="Lapidus A."/>
            <person name="Barry K."/>
            <person name="Detter J.C."/>
            <person name="Glavina del Rio T."/>
            <person name="Hammon N."/>
            <person name="Israni S."/>
            <person name="Dalin E."/>
            <person name="Tice H."/>
            <person name="Pitluck S."/>
            <person name="Saunders E."/>
            <person name="Brettin T."/>
            <person name="Bruce D."/>
            <person name="Han C."/>
            <person name="Tapia R."/>
            <person name="Gilna P."/>
            <person name="Schmutz J."/>
            <person name="Larimer F."/>
            <person name="Land M."/>
            <person name="Hauser L."/>
            <person name="Kyrpides N."/>
            <person name="Mikhailova N."/>
            <person name="Viollier P."/>
            <person name="Stephens C."/>
            <person name="Richardson P."/>
        </authorList>
    </citation>
    <scope>NUCLEOTIDE SEQUENCE [LARGE SCALE GENOMIC DNA]</scope>
    <source>
        <strain>MCS10</strain>
    </source>
</reference>
<comment type="catalytic activity">
    <reaction evidence="1">
        <text>5-amino-1-(5-phospho-D-ribosyl)imidazole-4-carboxylate + L-aspartate + ATP = (2S)-2-[5-amino-1-(5-phospho-beta-D-ribosyl)imidazole-4-carboxamido]succinate + ADP + phosphate + 2 H(+)</text>
        <dbReference type="Rhea" id="RHEA:22628"/>
        <dbReference type="ChEBI" id="CHEBI:15378"/>
        <dbReference type="ChEBI" id="CHEBI:29991"/>
        <dbReference type="ChEBI" id="CHEBI:30616"/>
        <dbReference type="ChEBI" id="CHEBI:43474"/>
        <dbReference type="ChEBI" id="CHEBI:58443"/>
        <dbReference type="ChEBI" id="CHEBI:77657"/>
        <dbReference type="ChEBI" id="CHEBI:456216"/>
        <dbReference type="EC" id="6.3.2.6"/>
    </reaction>
</comment>
<comment type="pathway">
    <text evidence="1">Purine metabolism; IMP biosynthesis via de novo pathway; 5-amino-1-(5-phospho-D-ribosyl)imidazole-4-carboxamide from 5-amino-1-(5-phospho-D-ribosyl)imidazole-4-carboxylate: step 1/2.</text>
</comment>
<comment type="similarity">
    <text evidence="1">Belongs to the SAICAR synthetase family.</text>
</comment>
<evidence type="ECO:0000255" key="1">
    <source>
        <dbReference type="HAMAP-Rule" id="MF_00137"/>
    </source>
</evidence>
<sequence>MSRRKMIYEGKAKILYEGPEPGTIVQYFKDDATAFNNQKKATLEGKGVLNNRISEHIMLGLGRIGIPTHFLKRLNMREQLVRQVEIIPLEVVCRNVAAGSISTRLGVPEGDQLPRSIVEFYYKKDELGDPMISEEHITAFNWATHQEIDDMMAMTLRVNDFLCGLFTGAGIRLVDFKLEFGRHYEGDMVRTVLADEISPDSCRLWDLETNEKMDKDRFRRDMGNVTEAYAEVARRLGIMKESGQGAANGDVGKGDAAK</sequence>
<accession>Q0AQW2</accession>
<keyword id="KW-0067">ATP-binding</keyword>
<keyword id="KW-0436">Ligase</keyword>
<keyword id="KW-0547">Nucleotide-binding</keyword>
<keyword id="KW-0658">Purine biosynthesis</keyword>
<keyword id="KW-1185">Reference proteome</keyword>
<feature type="chain" id="PRO_1000018726" description="Phosphoribosylaminoimidazole-succinocarboxamide synthase">
    <location>
        <begin position="1"/>
        <end position="258"/>
    </location>
</feature>
<name>PUR7_MARMM</name>
<protein>
    <recommendedName>
        <fullName evidence="1">Phosphoribosylaminoimidazole-succinocarboxamide synthase</fullName>
        <ecNumber evidence="1">6.3.2.6</ecNumber>
    </recommendedName>
    <alternativeName>
        <fullName evidence="1">SAICAR synthetase</fullName>
    </alternativeName>
</protein>
<organism>
    <name type="scientific">Maricaulis maris (strain MCS10)</name>
    <name type="common">Caulobacter maris</name>
    <dbReference type="NCBI Taxonomy" id="394221"/>
    <lineage>
        <taxon>Bacteria</taxon>
        <taxon>Pseudomonadati</taxon>
        <taxon>Pseudomonadota</taxon>
        <taxon>Alphaproteobacteria</taxon>
        <taxon>Maricaulales</taxon>
        <taxon>Maricaulaceae</taxon>
        <taxon>Maricaulis</taxon>
    </lineage>
</organism>
<proteinExistence type="inferred from homology"/>